<evidence type="ECO:0000255" key="1">
    <source>
        <dbReference type="HAMAP-Rule" id="MF_00104"/>
    </source>
</evidence>
<dbReference type="EC" id="3.1.26.3" evidence="1"/>
<dbReference type="EMBL" id="CP000922">
    <property type="protein sequence ID" value="ACJ34131.1"/>
    <property type="molecule type" value="Genomic_DNA"/>
</dbReference>
<dbReference type="RefSeq" id="WP_012575332.1">
    <property type="nucleotide sequence ID" value="NC_011567.1"/>
</dbReference>
<dbReference type="SMR" id="B7GGE9"/>
<dbReference type="STRING" id="491915.Aflv_1770"/>
<dbReference type="GeneID" id="7038023"/>
<dbReference type="KEGG" id="afl:Aflv_1770"/>
<dbReference type="PATRIC" id="fig|491915.6.peg.1819"/>
<dbReference type="eggNOG" id="COG0571">
    <property type="taxonomic scope" value="Bacteria"/>
</dbReference>
<dbReference type="HOGENOM" id="CLU_000907_1_3_9"/>
<dbReference type="Proteomes" id="UP000000742">
    <property type="component" value="Chromosome"/>
</dbReference>
<dbReference type="GO" id="GO:0005737">
    <property type="term" value="C:cytoplasm"/>
    <property type="evidence" value="ECO:0007669"/>
    <property type="project" value="UniProtKB-SubCell"/>
</dbReference>
<dbReference type="GO" id="GO:0003725">
    <property type="term" value="F:double-stranded RNA binding"/>
    <property type="evidence" value="ECO:0007669"/>
    <property type="project" value="TreeGrafter"/>
</dbReference>
<dbReference type="GO" id="GO:0046872">
    <property type="term" value="F:metal ion binding"/>
    <property type="evidence" value="ECO:0007669"/>
    <property type="project" value="UniProtKB-KW"/>
</dbReference>
<dbReference type="GO" id="GO:0004525">
    <property type="term" value="F:ribonuclease III activity"/>
    <property type="evidence" value="ECO:0007669"/>
    <property type="project" value="UniProtKB-UniRule"/>
</dbReference>
<dbReference type="GO" id="GO:0019843">
    <property type="term" value="F:rRNA binding"/>
    <property type="evidence" value="ECO:0007669"/>
    <property type="project" value="UniProtKB-KW"/>
</dbReference>
<dbReference type="GO" id="GO:0006397">
    <property type="term" value="P:mRNA processing"/>
    <property type="evidence" value="ECO:0007669"/>
    <property type="project" value="UniProtKB-UniRule"/>
</dbReference>
<dbReference type="GO" id="GO:0010468">
    <property type="term" value="P:regulation of gene expression"/>
    <property type="evidence" value="ECO:0007669"/>
    <property type="project" value="TreeGrafter"/>
</dbReference>
<dbReference type="GO" id="GO:0006364">
    <property type="term" value="P:rRNA processing"/>
    <property type="evidence" value="ECO:0007669"/>
    <property type="project" value="UniProtKB-UniRule"/>
</dbReference>
<dbReference type="GO" id="GO:0008033">
    <property type="term" value="P:tRNA processing"/>
    <property type="evidence" value="ECO:0007669"/>
    <property type="project" value="UniProtKB-KW"/>
</dbReference>
<dbReference type="CDD" id="cd10845">
    <property type="entry name" value="DSRM_RNAse_III_family"/>
    <property type="match status" value="1"/>
</dbReference>
<dbReference type="CDD" id="cd00593">
    <property type="entry name" value="RIBOc"/>
    <property type="match status" value="1"/>
</dbReference>
<dbReference type="FunFam" id="1.10.1520.10:FF:000001">
    <property type="entry name" value="Ribonuclease 3"/>
    <property type="match status" value="1"/>
</dbReference>
<dbReference type="FunFam" id="3.30.160.20:FF:000003">
    <property type="entry name" value="Ribonuclease 3"/>
    <property type="match status" value="1"/>
</dbReference>
<dbReference type="Gene3D" id="3.30.160.20">
    <property type="match status" value="1"/>
</dbReference>
<dbReference type="Gene3D" id="1.10.1520.10">
    <property type="entry name" value="Ribonuclease III domain"/>
    <property type="match status" value="1"/>
</dbReference>
<dbReference type="HAMAP" id="MF_00104">
    <property type="entry name" value="RNase_III"/>
    <property type="match status" value="1"/>
</dbReference>
<dbReference type="InterPro" id="IPR014720">
    <property type="entry name" value="dsRBD_dom"/>
</dbReference>
<dbReference type="InterPro" id="IPR011907">
    <property type="entry name" value="RNase_III"/>
</dbReference>
<dbReference type="InterPro" id="IPR000999">
    <property type="entry name" value="RNase_III_dom"/>
</dbReference>
<dbReference type="InterPro" id="IPR036389">
    <property type="entry name" value="RNase_III_sf"/>
</dbReference>
<dbReference type="NCBIfam" id="TIGR02191">
    <property type="entry name" value="RNaseIII"/>
    <property type="match status" value="1"/>
</dbReference>
<dbReference type="PANTHER" id="PTHR11207:SF0">
    <property type="entry name" value="RIBONUCLEASE 3"/>
    <property type="match status" value="1"/>
</dbReference>
<dbReference type="PANTHER" id="PTHR11207">
    <property type="entry name" value="RIBONUCLEASE III"/>
    <property type="match status" value="1"/>
</dbReference>
<dbReference type="Pfam" id="PF00035">
    <property type="entry name" value="dsrm"/>
    <property type="match status" value="1"/>
</dbReference>
<dbReference type="Pfam" id="PF14622">
    <property type="entry name" value="Ribonucleas_3_3"/>
    <property type="match status" value="1"/>
</dbReference>
<dbReference type="SMART" id="SM00358">
    <property type="entry name" value="DSRM"/>
    <property type="match status" value="1"/>
</dbReference>
<dbReference type="SMART" id="SM00535">
    <property type="entry name" value="RIBOc"/>
    <property type="match status" value="1"/>
</dbReference>
<dbReference type="SUPFAM" id="SSF54768">
    <property type="entry name" value="dsRNA-binding domain-like"/>
    <property type="match status" value="1"/>
</dbReference>
<dbReference type="SUPFAM" id="SSF69065">
    <property type="entry name" value="RNase III domain-like"/>
    <property type="match status" value="1"/>
</dbReference>
<dbReference type="PROSITE" id="PS50137">
    <property type="entry name" value="DS_RBD"/>
    <property type="match status" value="1"/>
</dbReference>
<dbReference type="PROSITE" id="PS00517">
    <property type="entry name" value="RNASE_3_1"/>
    <property type="match status" value="1"/>
</dbReference>
<dbReference type="PROSITE" id="PS50142">
    <property type="entry name" value="RNASE_3_2"/>
    <property type="match status" value="1"/>
</dbReference>
<organism>
    <name type="scientific">Anoxybacillus flavithermus (strain DSM 21510 / WK1)</name>
    <dbReference type="NCBI Taxonomy" id="491915"/>
    <lineage>
        <taxon>Bacteria</taxon>
        <taxon>Bacillati</taxon>
        <taxon>Bacillota</taxon>
        <taxon>Bacilli</taxon>
        <taxon>Bacillales</taxon>
        <taxon>Anoxybacillaceae</taxon>
        <taxon>Anoxybacillus</taxon>
    </lineage>
</organism>
<protein>
    <recommendedName>
        <fullName evidence="1">Ribonuclease 3</fullName>
        <ecNumber evidence="1">3.1.26.3</ecNumber>
    </recommendedName>
    <alternativeName>
        <fullName evidence="1">Ribonuclease III</fullName>
        <shortName evidence="1">RNase III</shortName>
    </alternativeName>
</protein>
<gene>
    <name evidence="1" type="primary">rnc</name>
    <name type="ordered locus">Aflv_1770</name>
</gene>
<feature type="chain" id="PRO_1000194405" description="Ribonuclease 3">
    <location>
        <begin position="1"/>
        <end position="238"/>
    </location>
</feature>
<feature type="domain" description="RNase III" evidence="1">
    <location>
        <begin position="10"/>
        <end position="139"/>
    </location>
</feature>
<feature type="domain" description="DRBM" evidence="1">
    <location>
        <begin position="165"/>
        <end position="234"/>
    </location>
</feature>
<feature type="active site" evidence="1">
    <location>
        <position position="56"/>
    </location>
</feature>
<feature type="active site" evidence="1">
    <location>
        <position position="128"/>
    </location>
</feature>
<feature type="binding site" evidence="1">
    <location>
        <position position="52"/>
    </location>
    <ligand>
        <name>Mg(2+)</name>
        <dbReference type="ChEBI" id="CHEBI:18420"/>
    </ligand>
</feature>
<feature type="binding site" evidence="1">
    <location>
        <position position="125"/>
    </location>
    <ligand>
        <name>Mg(2+)</name>
        <dbReference type="ChEBI" id="CHEBI:18420"/>
    </ligand>
</feature>
<feature type="binding site" evidence="1">
    <location>
        <position position="128"/>
    </location>
    <ligand>
        <name>Mg(2+)</name>
        <dbReference type="ChEBI" id="CHEBI:18420"/>
    </ligand>
</feature>
<comment type="function">
    <text evidence="1">Digests double-stranded RNA. Involved in the processing of primary rRNA transcript to yield the immediate precursors to the large and small rRNAs (23S and 16S). Processes some mRNAs, and tRNAs when they are encoded in the rRNA operon. Processes pre-crRNA and tracrRNA of type II CRISPR loci if present in the organism.</text>
</comment>
<comment type="catalytic activity">
    <reaction evidence="1">
        <text>Endonucleolytic cleavage to 5'-phosphomonoester.</text>
        <dbReference type="EC" id="3.1.26.3"/>
    </reaction>
</comment>
<comment type="cofactor">
    <cofactor evidence="1">
        <name>Mg(2+)</name>
        <dbReference type="ChEBI" id="CHEBI:18420"/>
    </cofactor>
</comment>
<comment type="subunit">
    <text evidence="1">Homodimer.</text>
</comment>
<comment type="subcellular location">
    <subcellularLocation>
        <location evidence="1">Cytoplasm</location>
    </subcellularLocation>
</comment>
<comment type="similarity">
    <text evidence="1">Belongs to the ribonuclease III family.</text>
</comment>
<accession>B7GGE9</accession>
<reference key="1">
    <citation type="journal article" date="2008" name="Genome Biol.">
        <title>Encapsulated in silica: genome, proteome and physiology of the thermophilic bacterium Anoxybacillus flavithermus WK1.</title>
        <authorList>
            <person name="Saw J.H."/>
            <person name="Mountain B.W."/>
            <person name="Feng L."/>
            <person name="Omelchenko M.V."/>
            <person name="Hou S."/>
            <person name="Saito J.A."/>
            <person name="Stott M.B."/>
            <person name="Li D."/>
            <person name="Zhao G."/>
            <person name="Wu J."/>
            <person name="Galperin M.Y."/>
            <person name="Koonin E.V."/>
            <person name="Makarova K.S."/>
            <person name="Wolf Y.I."/>
            <person name="Rigden D.J."/>
            <person name="Dunfield P.F."/>
            <person name="Wang L."/>
            <person name="Alam M."/>
        </authorList>
    </citation>
    <scope>NUCLEOTIDE SEQUENCE [LARGE SCALE GENOMIC DNA]</scope>
    <source>
        <strain>DSM 21510 / WK1</strain>
    </source>
</reference>
<name>RNC_ANOFW</name>
<sequence length="238" mass="26977">MSKQRPYVKFKQFQEQTGIFFRNEKLLIQAFTHSSYVNEHRKRLHEDNERLEFLGDAVLELTVSQYLFEQFPQMSEGELTKMRAAIVCEPSLVTFAHALSFGDLVLLGKGEELTGGRMRPSLLADVFEAFIGALYLDQGIEAVVQFLGKTIFPKIREGAFSHVMDYKSQLQEFVQRDGSGVLEYKILQERGPAHNKEFVSRVSLNGEELGVGVGRSKKEAEQRAAQMALAKLKQLQQG</sequence>
<proteinExistence type="inferred from homology"/>
<keyword id="KW-0963">Cytoplasm</keyword>
<keyword id="KW-0255">Endonuclease</keyword>
<keyword id="KW-0378">Hydrolase</keyword>
<keyword id="KW-0460">Magnesium</keyword>
<keyword id="KW-0479">Metal-binding</keyword>
<keyword id="KW-0507">mRNA processing</keyword>
<keyword id="KW-0540">Nuclease</keyword>
<keyword id="KW-0694">RNA-binding</keyword>
<keyword id="KW-0698">rRNA processing</keyword>
<keyword id="KW-0699">rRNA-binding</keyword>
<keyword id="KW-0819">tRNA processing</keyword>